<accession>P23237</accession>
<protein>
    <recommendedName>
        <fullName>Alcohol dehydrogenase 2</fullName>
        <ecNumber>1.1.1.1</ecNumber>
    </recommendedName>
</protein>
<sequence length="254" mass="27415">MAIANKNIIFVAGLGGIGLDTSREIVKSGPKNLVILDRIDNPAAIAELKAINPKVTITFYPYDVTVSVAESTKLLKVIFDKLKTVDLLINGAGILDDYQIERTIAVNFAGTVNTTTAIMAFWDKRKGGPGGVIANICSVTGFNAIYQVPVYSASKAAALSFTNSLAKLAPITGVTAYSINPGITKTTLVHKFNSWLDVEPRVAELLLEHPTQTTLQCAQNFVKAIEANKNGAIWKLDLGRLDAIEWTKHWDSGI</sequence>
<organism>
    <name type="scientific">Drosophila hydei</name>
    <name type="common">Fruit fly</name>
    <dbReference type="NCBI Taxonomy" id="7224"/>
    <lineage>
        <taxon>Eukaryota</taxon>
        <taxon>Metazoa</taxon>
        <taxon>Ecdysozoa</taxon>
        <taxon>Arthropoda</taxon>
        <taxon>Hexapoda</taxon>
        <taxon>Insecta</taxon>
        <taxon>Pterygota</taxon>
        <taxon>Neoptera</taxon>
        <taxon>Endopterygota</taxon>
        <taxon>Diptera</taxon>
        <taxon>Brachycera</taxon>
        <taxon>Muscomorpha</taxon>
        <taxon>Ephydroidea</taxon>
        <taxon>Drosophilidae</taxon>
        <taxon>Drosophila</taxon>
    </lineage>
</organism>
<gene>
    <name type="primary">Adh2</name>
</gene>
<evidence type="ECO:0000250" key="1"/>
<evidence type="ECO:0000255" key="2">
    <source>
        <dbReference type="PROSITE-ProRule" id="PRU10001"/>
    </source>
</evidence>
<evidence type="ECO:0000305" key="3"/>
<name>ADH2_DROHY</name>
<proteinExistence type="inferred from homology"/>
<keyword id="KW-0520">NAD</keyword>
<keyword id="KW-0560">Oxidoreductase</keyword>
<feature type="initiator methionine" description="Removed">
    <location>
        <position position="1"/>
    </location>
</feature>
<feature type="chain" id="PRO_0000054467" description="Alcohol dehydrogenase 2">
    <location>
        <begin position="2"/>
        <end position="254"/>
    </location>
</feature>
<feature type="active site" description="Proton acceptor" evidence="2">
    <location>
        <position position="151"/>
    </location>
</feature>
<feature type="binding site" evidence="1">
    <location>
        <begin position="10"/>
        <end position="33"/>
    </location>
    <ligand>
        <name>NAD(+)</name>
        <dbReference type="ChEBI" id="CHEBI:57540"/>
    </ligand>
</feature>
<feature type="binding site" evidence="1">
    <location>
        <position position="138"/>
    </location>
    <ligand>
        <name>substrate</name>
    </ligand>
</feature>
<comment type="catalytic activity">
    <reaction evidence="2">
        <text>a primary alcohol + NAD(+) = an aldehyde + NADH + H(+)</text>
        <dbReference type="Rhea" id="RHEA:10736"/>
        <dbReference type="ChEBI" id="CHEBI:15378"/>
        <dbReference type="ChEBI" id="CHEBI:15734"/>
        <dbReference type="ChEBI" id="CHEBI:17478"/>
        <dbReference type="ChEBI" id="CHEBI:57540"/>
        <dbReference type="ChEBI" id="CHEBI:57945"/>
        <dbReference type="EC" id="1.1.1.1"/>
    </reaction>
</comment>
<comment type="catalytic activity">
    <reaction evidence="2">
        <text>a secondary alcohol + NAD(+) = a ketone + NADH + H(+)</text>
        <dbReference type="Rhea" id="RHEA:10740"/>
        <dbReference type="ChEBI" id="CHEBI:15378"/>
        <dbReference type="ChEBI" id="CHEBI:17087"/>
        <dbReference type="ChEBI" id="CHEBI:35681"/>
        <dbReference type="ChEBI" id="CHEBI:57540"/>
        <dbReference type="ChEBI" id="CHEBI:57945"/>
        <dbReference type="EC" id="1.1.1.1"/>
    </reaction>
</comment>
<comment type="subunit">
    <text>Homodimer.</text>
</comment>
<comment type="similarity">
    <text evidence="3">Belongs to the short-chain dehydrogenases/reductases (SDR) family.</text>
</comment>
<reference key="1">
    <citation type="journal article" date="1991" name="Genetics">
        <title>Characterization of the structure and evolution of the Adh region of Drosophila hydei.</title>
        <authorList>
            <person name="Menotti-Raymond M."/>
            <person name="Starmer W.T."/>
            <person name="Sullivan D.T."/>
        </authorList>
    </citation>
    <scope>NUCLEOTIDE SEQUENCE [GENOMIC DNA]</scope>
</reference>
<dbReference type="EC" id="1.1.1.1"/>
<dbReference type="EMBL" id="X58694">
    <property type="protein sequence ID" value="CAA41539.1"/>
    <property type="molecule type" value="Genomic_DNA"/>
</dbReference>
<dbReference type="PIR" id="S15711">
    <property type="entry name" value="S15711"/>
</dbReference>
<dbReference type="SMR" id="P23237"/>
<dbReference type="OrthoDB" id="417891at2759"/>
<dbReference type="Proteomes" id="UP000504633">
    <property type="component" value="Unplaced"/>
</dbReference>
<dbReference type="GO" id="GO:0005737">
    <property type="term" value="C:cytoplasm"/>
    <property type="evidence" value="ECO:0007669"/>
    <property type="project" value="TreeGrafter"/>
</dbReference>
<dbReference type="GO" id="GO:0004022">
    <property type="term" value="F:alcohol dehydrogenase (NAD+) activity"/>
    <property type="evidence" value="ECO:0000250"/>
    <property type="project" value="UniProtKB"/>
</dbReference>
<dbReference type="GO" id="GO:0006066">
    <property type="term" value="P:alcohol metabolic process"/>
    <property type="evidence" value="ECO:0007669"/>
    <property type="project" value="InterPro"/>
</dbReference>
<dbReference type="CDD" id="cd05323">
    <property type="entry name" value="ADH_SDR_c_like"/>
    <property type="match status" value="1"/>
</dbReference>
<dbReference type="FunFam" id="3.40.50.720:FF:000302">
    <property type="entry name" value="Alcohol dehydrogenase"/>
    <property type="match status" value="1"/>
</dbReference>
<dbReference type="Gene3D" id="3.40.50.720">
    <property type="entry name" value="NAD(P)-binding Rossmann-like Domain"/>
    <property type="match status" value="1"/>
</dbReference>
<dbReference type="InterPro" id="IPR002425">
    <property type="entry name" value="ADH_Drosophila-type"/>
</dbReference>
<dbReference type="InterPro" id="IPR036291">
    <property type="entry name" value="NAD(P)-bd_dom_sf"/>
</dbReference>
<dbReference type="InterPro" id="IPR020904">
    <property type="entry name" value="Sc_DH/Rdtase_CS"/>
</dbReference>
<dbReference type="InterPro" id="IPR002347">
    <property type="entry name" value="SDR_fam"/>
</dbReference>
<dbReference type="PANTHER" id="PTHR44229">
    <property type="entry name" value="15-HYDROXYPROSTAGLANDIN DEHYDROGENASE [NAD(+)]"/>
    <property type="match status" value="1"/>
</dbReference>
<dbReference type="PANTHER" id="PTHR44229:SF8">
    <property type="entry name" value="ALCOHOL DEHYDROGENASE-RELATED"/>
    <property type="match status" value="1"/>
</dbReference>
<dbReference type="Pfam" id="PF00106">
    <property type="entry name" value="adh_short"/>
    <property type="match status" value="1"/>
</dbReference>
<dbReference type="PRINTS" id="PR01168">
    <property type="entry name" value="ALCDHDRGNASE"/>
</dbReference>
<dbReference type="PRINTS" id="PR01167">
    <property type="entry name" value="INSADHFAMILY"/>
</dbReference>
<dbReference type="PRINTS" id="PR00080">
    <property type="entry name" value="SDRFAMILY"/>
</dbReference>
<dbReference type="SUPFAM" id="SSF51735">
    <property type="entry name" value="NAD(P)-binding Rossmann-fold domains"/>
    <property type="match status" value="1"/>
</dbReference>
<dbReference type="PROSITE" id="PS00061">
    <property type="entry name" value="ADH_SHORT"/>
    <property type="match status" value="1"/>
</dbReference>